<keyword id="KW-0963">Cytoplasm</keyword>
<keyword id="KW-0489">Methyltransferase</keyword>
<keyword id="KW-0698">rRNA processing</keyword>
<keyword id="KW-0949">S-adenosyl-L-methionine</keyword>
<keyword id="KW-0808">Transferase</keyword>
<reference key="1">
    <citation type="journal article" date="2006" name="Science">
        <title>Genomic islands and the ecology and evolution of Prochlorococcus.</title>
        <authorList>
            <person name="Coleman M.L."/>
            <person name="Sullivan M.B."/>
            <person name="Martiny A.C."/>
            <person name="Steglich C."/>
            <person name="Barry K."/>
            <person name="Delong E.F."/>
            <person name="Chisholm S.W."/>
        </authorList>
    </citation>
    <scope>NUCLEOTIDE SEQUENCE [LARGE SCALE GENOMIC DNA]</scope>
    <source>
        <strain>MIT 9312</strain>
    </source>
</reference>
<evidence type="ECO:0000255" key="1">
    <source>
        <dbReference type="HAMAP-Rule" id="MF_00658"/>
    </source>
</evidence>
<comment type="function">
    <text evidence="1">Specifically methylates the pseudouridine at position 1915 (m3Psi1915) in 23S rRNA.</text>
</comment>
<comment type="catalytic activity">
    <reaction evidence="1">
        <text>pseudouridine(1915) in 23S rRNA + S-adenosyl-L-methionine = N(3)-methylpseudouridine(1915) in 23S rRNA + S-adenosyl-L-homocysteine + H(+)</text>
        <dbReference type="Rhea" id="RHEA:42752"/>
        <dbReference type="Rhea" id="RHEA-COMP:10221"/>
        <dbReference type="Rhea" id="RHEA-COMP:10222"/>
        <dbReference type="ChEBI" id="CHEBI:15378"/>
        <dbReference type="ChEBI" id="CHEBI:57856"/>
        <dbReference type="ChEBI" id="CHEBI:59789"/>
        <dbReference type="ChEBI" id="CHEBI:65314"/>
        <dbReference type="ChEBI" id="CHEBI:74486"/>
        <dbReference type="EC" id="2.1.1.177"/>
    </reaction>
</comment>
<comment type="subunit">
    <text evidence="1">Homodimer.</text>
</comment>
<comment type="subcellular location">
    <subcellularLocation>
        <location evidence="1">Cytoplasm</location>
    </subcellularLocation>
</comment>
<comment type="similarity">
    <text evidence="1">Belongs to the RNA methyltransferase RlmH family.</text>
</comment>
<dbReference type="EC" id="2.1.1.177" evidence="1"/>
<dbReference type="EMBL" id="CP000111">
    <property type="protein sequence ID" value="ABB49924.1"/>
    <property type="molecule type" value="Genomic_DNA"/>
</dbReference>
<dbReference type="RefSeq" id="WP_011376419.1">
    <property type="nucleotide sequence ID" value="NC_007577.1"/>
</dbReference>
<dbReference type="SMR" id="Q31B21"/>
<dbReference type="STRING" id="74546.PMT9312_0864"/>
<dbReference type="KEGG" id="pmi:PMT9312_0864"/>
<dbReference type="eggNOG" id="COG1576">
    <property type="taxonomic scope" value="Bacteria"/>
</dbReference>
<dbReference type="HOGENOM" id="CLU_100552_2_0_3"/>
<dbReference type="OrthoDB" id="9806643at2"/>
<dbReference type="Proteomes" id="UP000002715">
    <property type="component" value="Chromosome"/>
</dbReference>
<dbReference type="GO" id="GO:0005737">
    <property type="term" value="C:cytoplasm"/>
    <property type="evidence" value="ECO:0007669"/>
    <property type="project" value="UniProtKB-SubCell"/>
</dbReference>
<dbReference type="GO" id="GO:0070038">
    <property type="term" value="F:rRNA (pseudouridine-N3-)-methyltransferase activity"/>
    <property type="evidence" value="ECO:0007669"/>
    <property type="project" value="UniProtKB-UniRule"/>
</dbReference>
<dbReference type="CDD" id="cd18081">
    <property type="entry name" value="RlmH-like"/>
    <property type="match status" value="1"/>
</dbReference>
<dbReference type="Gene3D" id="3.40.1280.10">
    <property type="match status" value="1"/>
</dbReference>
<dbReference type="HAMAP" id="MF_00658">
    <property type="entry name" value="23SrRNA_methyltr_H"/>
    <property type="match status" value="1"/>
</dbReference>
<dbReference type="InterPro" id="IPR029028">
    <property type="entry name" value="Alpha/beta_knot_MTases"/>
</dbReference>
<dbReference type="InterPro" id="IPR003742">
    <property type="entry name" value="RlmH-like"/>
</dbReference>
<dbReference type="InterPro" id="IPR029026">
    <property type="entry name" value="tRNA_m1G_MTases_N"/>
</dbReference>
<dbReference type="PANTHER" id="PTHR33603">
    <property type="entry name" value="METHYLTRANSFERASE"/>
    <property type="match status" value="1"/>
</dbReference>
<dbReference type="PANTHER" id="PTHR33603:SF1">
    <property type="entry name" value="RIBOSOMAL RNA LARGE SUBUNIT METHYLTRANSFERASE H"/>
    <property type="match status" value="1"/>
</dbReference>
<dbReference type="Pfam" id="PF02590">
    <property type="entry name" value="SPOUT_MTase"/>
    <property type="match status" value="1"/>
</dbReference>
<dbReference type="PIRSF" id="PIRSF004505">
    <property type="entry name" value="MT_bac"/>
    <property type="match status" value="1"/>
</dbReference>
<dbReference type="SUPFAM" id="SSF75217">
    <property type="entry name" value="alpha/beta knot"/>
    <property type="match status" value="1"/>
</dbReference>
<proteinExistence type="inferred from homology"/>
<gene>
    <name evidence="1" type="primary">rlmH</name>
    <name type="ordered locus">PMT9312_0864</name>
</gene>
<organism>
    <name type="scientific">Prochlorococcus marinus (strain MIT 9312)</name>
    <dbReference type="NCBI Taxonomy" id="74546"/>
    <lineage>
        <taxon>Bacteria</taxon>
        <taxon>Bacillati</taxon>
        <taxon>Cyanobacteriota</taxon>
        <taxon>Cyanophyceae</taxon>
        <taxon>Synechococcales</taxon>
        <taxon>Prochlorococcaceae</taxon>
        <taxon>Prochlorococcus</taxon>
    </lineage>
</organism>
<protein>
    <recommendedName>
        <fullName evidence="1">Ribosomal RNA large subunit methyltransferase H</fullName>
        <ecNumber evidence="1">2.1.1.177</ecNumber>
    </recommendedName>
    <alternativeName>
        <fullName evidence="1">23S rRNA (pseudouridine1915-N3)-methyltransferase</fullName>
    </alternativeName>
    <alternativeName>
        <fullName evidence="1">23S rRNA m3Psi1915 methyltransferase</fullName>
    </alternativeName>
    <alternativeName>
        <fullName evidence="1">rRNA (pseudouridine-N3-)-methyltransferase RlmH</fullName>
    </alternativeName>
</protein>
<name>RLMH_PROM9</name>
<sequence length="138" mass="15891">MLQSNRLAIYAIGKIKKLWIRDGINQYKKRMPELIINELKTFNLNNLRSNNNIIICLSEEGKQFNSVELCSLLLNFKNKKINFLIGDTDGISSDIKKNSDLILSLSPLTFPHELARLILIEQIYRAISISNNSPYHRS</sequence>
<accession>Q31B21</accession>
<feature type="chain" id="PRO_0000260582" description="Ribosomal RNA large subunit methyltransferase H">
    <location>
        <begin position="1"/>
        <end position="138"/>
    </location>
</feature>
<feature type="binding site" evidence="1">
    <location>
        <position position="57"/>
    </location>
    <ligand>
        <name>S-adenosyl-L-methionine</name>
        <dbReference type="ChEBI" id="CHEBI:59789"/>
    </ligand>
</feature>
<feature type="binding site" evidence="1">
    <location>
        <position position="86"/>
    </location>
    <ligand>
        <name>S-adenosyl-L-methionine</name>
        <dbReference type="ChEBI" id="CHEBI:59789"/>
    </ligand>
</feature>
<feature type="binding site" evidence="1">
    <location>
        <begin position="105"/>
        <end position="110"/>
    </location>
    <ligand>
        <name>S-adenosyl-L-methionine</name>
        <dbReference type="ChEBI" id="CHEBI:59789"/>
    </ligand>
</feature>